<keyword id="KW-0997">Cell inner membrane</keyword>
<keyword id="KW-1003">Cell membrane</keyword>
<keyword id="KW-0472">Membrane</keyword>
<keyword id="KW-0812">Transmembrane</keyword>
<keyword id="KW-1133">Transmembrane helix</keyword>
<sequence>MSTPDNRSVNFFSLFRRGQHYAKTWPMEKRLAPVFVENRVIRMTRYAIRFMPPVAVFTLCWQIALGGQLGPAVATALFALSLPMQGLWWLGKRSVTPLPPSILNWFYEVRGKLQEAGQALAPVEGKPDYQALADTLKRAFKQLDKTFLDDL</sequence>
<dbReference type="EMBL" id="CP001120">
    <property type="protein sequence ID" value="ACF67719.1"/>
    <property type="molecule type" value="Genomic_DNA"/>
</dbReference>
<dbReference type="RefSeq" id="WP_000106617.1">
    <property type="nucleotide sequence ID" value="NC_011083.1"/>
</dbReference>
<dbReference type="KEGG" id="seh:SeHA_C2576"/>
<dbReference type="HOGENOM" id="CLU_128746_0_0_6"/>
<dbReference type="Proteomes" id="UP000001866">
    <property type="component" value="Chromosome"/>
</dbReference>
<dbReference type="GO" id="GO:0005886">
    <property type="term" value="C:plasma membrane"/>
    <property type="evidence" value="ECO:0007669"/>
    <property type="project" value="UniProtKB-SubCell"/>
</dbReference>
<dbReference type="HAMAP" id="MF_01101">
    <property type="entry name" value="UPF0208"/>
    <property type="match status" value="1"/>
</dbReference>
<dbReference type="InterPro" id="IPR007334">
    <property type="entry name" value="UPF0208"/>
</dbReference>
<dbReference type="NCBIfam" id="NF002493">
    <property type="entry name" value="PRK01816.1"/>
    <property type="match status" value="1"/>
</dbReference>
<dbReference type="Pfam" id="PF04217">
    <property type="entry name" value="DUF412"/>
    <property type="match status" value="1"/>
</dbReference>
<gene>
    <name evidence="1" type="primary">yfbV</name>
    <name type="ordered locus">SeHA_C2576</name>
</gene>
<accession>B4TBK3</accession>
<organism>
    <name type="scientific">Salmonella heidelberg (strain SL476)</name>
    <dbReference type="NCBI Taxonomy" id="454169"/>
    <lineage>
        <taxon>Bacteria</taxon>
        <taxon>Pseudomonadati</taxon>
        <taxon>Pseudomonadota</taxon>
        <taxon>Gammaproteobacteria</taxon>
        <taxon>Enterobacterales</taxon>
        <taxon>Enterobacteriaceae</taxon>
        <taxon>Salmonella</taxon>
    </lineage>
</organism>
<evidence type="ECO:0000255" key="1">
    <source>
        <dbReference type="HAMAP-Rule" id="MF_01101"/>
    </source>
</evidence>
<reference key="1">
    <citation type="journal article" date="2011" name="J. Bacteriol.">
        <title>Comparative genomics of 28 Salmonella enterica isolates: evidence for CRISPR-mediated adaptive sublineage evolution.</title>
        <authorList>
            <person name="Fricke W.F."/>
            <person name="Mammel M.K."/>
            <person name="McDermott P.F."/>
            <person name="Tartera C."/>
            <person name="White D.G."/>
            <person name="Leclerc J.E."/>
            <person name="Ravel J."/>
            <person name="Cebula T.A."/>
        </authorList>
    </citation>
    <scope>NUCLEOTIDE SEQUENCE [LARGE SCALE GENOMIC DNA]</scope>
    <source>
        <strain>SL476</strain>
    </source>
</reference>
<name>YFBV_SALHS</name>
<comment type="subcellular location">
    <subcellularLocation>
        <location evidence="1">Cell inner membrane</location>
        <topology evidence="1">Multi-pass membrane protein</topology>
    </subcellularLocation>
</comment>
<comment type="similarity">
    <text evidence="1">Belongs to the UPF0208 family.</text>
</comment>
<proteinExistence type="inferred from homology"/>
<protein>
    <recommendedName>
        <fullName evidence="1">UPF0208 membrane protein YfbV</fullName>
    </recommendedName>
</protein>
<feature type="chain" id="PRO_1000136999" description="UPF0208 membrane protein YfbV">
    <location>
        <begin position="1"/>
        <end position="151"/>
    </location>
</feature>
<feature type="transmembrane region" description="Helical" evidence="1">
    <location>
        <begin position="46"/>
        <end position="65"/>
    </location>
</feature>
<feature type="transmembrane region" description="Helical" evidence="1">
    <location>
        <begin position="69"/>
        <end position="91"/>
    </location>
</feature>